<protein>
    <recommendedName>
        <fullName>Ascorbate-specific transmembrane electron transporter 1</fullName>
        <ecNumber>1.-.-.-</ecNumber>
    </recommendedName>
    <alternativeName>
        <fullName>Cytochrome b561-1</fullName>
        <shortName>Zmb561</shortName>
    </alternativeName>
</protein>
<comment type="function">
    <text evidence="5 6">Two-heme-containing cytochrome. Catalyzes ascorbate-dependent trans-membrane electron transfer by utilizing a concerted H(+)/e(-) transfer mechanism.</text>
</comment>
<comment type="cofactor">
    <cofactor evidence="2">
        <name>heme b</name>
        <dbReference type="ChEBI" id="CHEBI:60344"/>
    </cofactor>
    <text evidence="2">Binds 2 heme b groups non-covalently.</text>
</comment>
<comment type="activity regulation">
    <text evidence="5">Inhibited by diethylpyrocarbonate.</text>
</comment>
<comment type="subcellular location">
    <subcellularLocation>
        <location evidence="7">Membrane</location>
        <topology evidence="7">Multi-pass membrane protein</topology>
    </subcellularLocation>
</comment>
<comment type="miscellaneous">
    <text>Initial time lag in electron acceptance from ascorbate observed in acidic pH.</text>
</comment>
<comment type="sequence caution" evidence="7">
    <conflict type="miscellaneous discrepancy">
        <sequence resource="EMBL-CDS" id="ACN28843"/>
    </conflict>
    <text>Intron retention.</text>
</comment>
<gene>
    <name type="primary">ZCYB</name>
</gene>
<accession>Q6I681</accession>
<accession>C0P777</accession>
<proteinExistence type="evidence at protein level"/>
<reference key="1">
    <citation type="submission" date="2004-06" db="EMBL/GenBank/DDBJ databases">
        <title>cDNA cloning of Zea mays cytochrome b561.</title>
        <authorList>
            <person name="Takigami T."/>
            <person name="Kawabata T."/>
            <person name="Nakanishi N."/>
            <person name="Imoto K."/>
            <person name="Hase T."/>
            <person name="Orii H."/>
            <person name="Asada A."/>
            <person name="Tsubaki M."/>
        </authorList>
    </citation>
    <scope>NUCLEOTIDE SEQUENCE [MRNA]</scope>
    <source>
        <strain>cv. Golden cross Bantam T51</strain>
    </source>
</reference>
<reference key="2">
    <citation type="submission" date="2008-07" db="EMBL/GenBank/DDBJ databases">
        <title>Maize full-length cDNA project.</title>
        <authorList>
            <person name="Yu Y."/>
            <person name="Currie J."/>
            <person name="Lomeli R."/>
            <person name="Angelova A."/>
            <person name="Collura K."/>
            <person name="Wissotski M."/>
            <person name="Campos D."/>
            <person name="Kudrna D."/>
            <person name="Golser W."/>
            <person name="Ashely E."/>
            <person name="Haller K."/>
            <person name="Descour A."/>
            <person name="Fernandes J."/>
            <person name="Zuccolo A."/>
            <person name="Soderlund C."/>
            <person name="Walbot V."/>
        </authorList>
    </citation>
    <scope>NUCLEOTIDE SEQUENCE [LARGE SCALE MRNA]</scope>
    <source>
        <strain>cv. B73</strain>
    </source>
</reference>
<reference key="3">
    <citation type="journal article" date="2009" name="Plant Mol. Biol.">
        <title>Insights into corn genes derived from large-scale cDNA sequencing.</title>
        <authorList>
            <person name="Alexandrov N.N."/>
            <person name="Brover V.V."/>
            <person name="Freidin S."/>
            <person name="Troukhan M.E."/>
            <person name="Tatarinova T.V."/>
            <person name="Zhang H."/>
            <person name="Swaller T.J."/>
            <person name="Lu Y.-P."/>
            <person name="Bouck J."/>
            <person name="Flavell R.B."/>
            <person name="Feldmann K.A."/>
        </authorList>
    </citation>
    <scope>NUCLEOTIDE SEQUENCE [LARGE SCALE MRNA]</scope>
</reference>
<reference key="4">
    <citation type="journal article" date="2009" name="Biochemistry">
        <title>Importance of the conserved lysine 83 residue of Zea mays cytochrome b(561) for ascorbate-specific transmembrane electron transfer as revealed by site-directed mutagenesis studies.</title>
        <authorList>
            <person name="Nakanishi N."/>
            <person name="Rahman M.M."/>
            <person name="Sakamoto Y."/>
            <person name="Takigami T."/>
            <person name="Kobayashi K."/>
            <person name="Hori H."/>
            <person name="Hase T."/>
            <person name="Park S.Y."/>
            <person name="Tsubaki M."/>
        </authorList>
    </citation>
    <scope>PROTEIN SEQUENCE OF 2-11</scope>
    <scope>FUNCTION</scope>
    <scope>MUTAGENESIS OF ARG-72; LYS-83; SER-118 AND TRP-122</scope>
    <source>
        <strain>cv. Golden cross Bantam T51</strain>
    </source>
</reference>
<reference key="5">
    <citation type="journal article" date="2009" name="J. Biochem.">
        <title>Inhibition of electron acceptance from ascorbate by the specific N-carbethoxylations of maize cytochrome b561: a common mechanism for the transmembrane electron transfer in cytochrome b561 protein family.</title>
        <authorList>
            <person name="Nakanishi N."/>
            <person name="Rahman M.M."/>
            <person name="Sakamoto Y."/>
            <person name="Miura M."/>
            <person name="Takeuchi F."/>
            <person name="Park S.Y."/>
            <person name="Tsubaki M."/>
        </authorList>
    </citation>
    <scope>FUNCTION</scope>
    <scope>ACTIVITY REGULATION</scope>
</reference>
<dbReference type="EC" id="1.-.-.-"/>
<dbReference type="EMBL" id="AB182641">
    <property type="protein sequence ID" value="BAD24966.1"/>
    <property type="molecule type" value="mRNA"/>
</dbReference>
<dbReference type="EMBL" id="BT039983">
    <property type="protein sequence ID" value="ACF84988.1"/>
    <property type="molecule type" value="mRNA"/>
</dbReference>
<dbReference type="EMBL" id="BT064146">
    <property type="protein sequence ID" value="ACN28843.1"/>
    <property type="status" value="ALT_SEQ"/>
    <property type="molecule type" value="mRNA"/>
</dbReference>
<dbReference type="EMBL" id="EU962707">
    <property type="protein sequence ID" value="ACG34825.1"/>
    <property type="molecule type" value="mRNA"/>
</dbReference>
<dbReference type="RefSeq" id="NP_001140931.1">
    <property type="nucleotide sequence ID" value="NM_001147459.1"/>
</dbReference>
<dbReference type="SMR" id="Q6I681"/>
<dbReference type="FunCoup" id="Q6I681">
    <property type="interactions" value="851"/>
</dbReference>
<dbReference type="STRING" id="4577.Q6I681"/>
<dbReference type="TCDB" id="5.B.2.1.6">
    <property type="family name" value="the eukaryotic cytochrome b561 (cytb561) family"/>
</dbReference>
<dbReference type="PaxDb" id="4577-GRMZM2G060357_P01"/>
<dbReference type="EnsemblPlants" id="Zm00001eb185950_T001">
    <property type="protein sequence ID" value="Zm00001eb185950_P001"/>
    <property type="gene ID" value="Zm00001eb185950"/>
</dbReference>
<dbReference type="GeneID" id="100273009"/>
<dbReference type="Gramene" id="Zm00001eb185950_T001">
    <property type="protein sequence ID" value="Zm00001eb185950_P001"/>
    <property type="gene ID" value="Zm00001eb185950"/>
</dbReference>
<dbReference type="KEGG" id="zma:100273009"/>
<dbReference type="eggNOG" id="KOG1619">
    <property type="taxonomic scope" value="Eukaryota"/>
</dbReference>
<dbReference type="HOGENOM" id="CLU_069712_0_1_1"/>
<dbReference type="InParanoid" id="Q6I681"/>
<dbReference type="OrthoDB" id="907479at2759"/>
<dbReference type="BRENDA" id="7.2.1.3">
    <property type="organism ID" value="6752"/>
</dbReference>
<dbReference type="Proteomes" id="UP000007305">
    <property type="component" value="Chromosome 4"/>
</dbReference>
<dbReference type="ExpressionAtlas" id="Q6I681">
    <property type="expression patterns" value="baseline and differential"/>
</dbReference>
<dbReference type="GO" id="GO:0016020">
    <property type="term" value="C:membrane"/>
    <property type="evidence" value="ECO:0007669"/>
    <property type="project" value="UniProtKB-SubCell"/>
</dbReference>
<dbReference type="GO" id="GO:0046872">
    <property type="term" value="F:metal ion binding"/>
    <property type="evidence" value="ECO:0007669"/>
    <property type="project" value="UniProtKB-KW"/>
</dbReference>
<dbReference type="GO" id="GO:0016491">
    <property type="term" value="F:oxidoreductase activity"/>
    <property type="evidence" value="ECO:0000318"/>
    <property type="project" value="GO_Central"/>
</dbReference>
<dbReference type="CDD" id="cd08766">
    <property type="entry name" value="Cyt_b561_ACYB-1_like"/>
    <property type="match status" value="1"/>
</dbReference>
<dbReference type="FunFam" id="1.20.120.1770:FF:000001">
    <property type="entry name" value="Cytochrome b reductase 1"/>
    <property type="match status" value="1"/>
</dbReference>
<dbReference type="Gene3D" id="1.20.120.1770">
    <property type="match status" value="1"/>
</dbReference>
<dbReference type="InterPro" id="IPR043205">
    <property type="entry name" value="CYB561/CYBRD1-like"/>
</dbReference>
<dbReference type="InterPro" id="IPR006593">
    <property type="entry name" value="Cyt_b561/ferric_Rdtase_TM"/>
</dbReference>
<dbReference type="PANTHER" id="PTHR10106">
    <property type="entry name" value="CYTOCHROME B561-RELATED"/>
    <property type="match status" value="1"/>
</dbReference>
<dbReference type="PANTHER" id="PTHR10106:SF22">
    <property type="entry name" value="TRANSMEMBRANE ASCORBATE FERRIREDUCTASE 1"/>
    <property type="match status" value="1"/>
</dbReference>
<dbReference type="Pfam" id="PF03188">
    <property type="entry name" value="Cytochrom_B561"/>
    <property type="match status" value="1"/>
</dbReference>
<dbReference type="SMART" id="SM00665">
    <property type="entry name" value="B561"/>
    <property type="match status" value="1"/>
</dbReference>
<dbReference type="PROSITE" id="PS50939">
    <property type="entry name" value="CYTOCHROME_B561"/>
    <property type="match status" value="1"/>
</dbReference>
<organism>
    <name type="scientific">Zea mays</name>
    <name type="common">Maize</name>
    <dbReference type="NCBI Taxonomy" id="4577"/>
    <lineage>
        <taxon>Eukaryota</taxon>
        <taxon>Viridiplantae</taxon>
        <taxon>Streptophyta</taxon>
        <taxon>Embryophyta</taxon>
        <taxon>Tracheophyta</taxon>
        <taxon>Spermatophyta</taxon>
        <taxon>Magnoliopsida</taxon>
        <taxon>Liliopsida</taxon>
        <taxon>Poales</taxon>
        <taxon>Poaceae</taxon>
        <taxon>PACMAD clade</taxon>
        <taxon>Panicoideae</taxon>
        <taxon>Andropogonodae</taxon>
        <taxon>Andropogoneae</taxon>
        <taxon>Tripsacinae</taxon>
        <taxon>Zea</taxon>
    </lineage>
</organism>
<sequence length="236" mass="25425">MGLGLGVRAAPFTYAAHALAVAAAAMVLVWSIQFRGGLAIESTNKNLIFNVHPVLMLIGYVIIGGEAIMVYRVLPTSNHDTTKLIHLILHGIALVLGAVGIYFAFKNHNESGIANLYSLHSWIGIGTITLYGIQWIIGFVTFFFPGAAPNVKKGVLPWHVLFGLFVYILALANAELGFLEKLTFLESSGLDKYGTEAFLVNFTALVVVLFGASVVVAAIAPVRLEEPQGYDPIPEN</sequence>
<evidence type="ECO:0000250" key="1"/>
<evidence type="ECO:0000250" key="2">
    <source>
        <dbReference type="UniProtKB" id="Q9SWS1"/>
    </source>
</evidence>
<evidence type="ECO:0000255" key="3"/>
<evidence type="ECO:0000255" key="4">
    <source>
        <dbReference type="PROSITE-ProRule" id="PRU00242"/>
    </source>
</evidence>
<evidence type="ECO:0000269" key="5">
    <source>
    </source>
</evidence>
<evidence type="ECO:0000269" key="6">
    <source>
    </source>
</evidence>
<evidence type="ECO:0000305" key="7"/>
<feature type="chain" id="PRO_0000416687" description="Ascorbate-specific transmembrane electron transporter 1">
    <location>
        <begin position="1"/>
        <end position="236"/>
    </location>
</feature>
<feature type="topological domain" description="Cytoplasmic" evidence="3">
    <location>
        <begin position="1"/>
        <end position="11"/>
    </location>
</feature>
<feature type="transmembrane region" description="Helical" evidence="3">
    <location>
        <begin position="12"/>
        <end position="32"/>
    </location>
</feature>
<feature type="topological domain" description="Extracellular" evidence="3">
    <location>
        <begin position="33"/>
        <end position="50"/>
    </location>
</feature>
<feature type="transmembrane region" description="Helical" evidence="3">
    <location>
        <begin position="51"/>
        <end position="71"/>
    </location>
</feature>
<feature type="topological domain" description="Cytoplasmic" evidence="3">
    <location>
        <begin position="72"/>
        <end position="84"/>
    </location>
</feature>
<feature type="transmembrane region" description="Helical" evidence="3">
    <location>
        <begin position="85"/>
        <end position="105"/>
    </location>
</feature>
<feature type="topological domain" description="Extracellular" evidence="3">
    <location>
        <begin position="106"/>
        <end position="122"/>
    </location>
</feature>
<feature type="transmembrane region" description="Helical" evidence="3">
    <location>
        <begin position="123"/>
        <end position="143"/>
    </location>
</feature>
<feature type="topological domain" description="Cytoplasmic" evidence="3">
    <location>
        <begin position="144"/>
        <end position="153"/>
    </location>
</feature>
<feature type="transmembrane region" description="Helical" evidence="3">
    <location>
        <begin position="154"/>
        <end position="174"/>
    </location>
</feature>
<feature type="topological domain" description="Extracellular" evidence="3">
    <location>
        <begin position="175"/>
        <end position="201"/>
    </location>
</feature>
<feature type="transmembrane region" description="Helical" evidence="3">
    <location>
        <begin position="202"/>
        <end position="222"/>
    </location>
</feature>
<feature type="topological domain" description="Cytoplasmic" evidence="3">
    <location>
        <begin position="223"/>
        <end position="236"/>
    </location>
</feature>
<feature type="domain" description="Cytochrome b561" evidence="4">
    <location>
        <begin position="15"/>
        <end position="219"/>
    </location>
</feature>
<feature type="binding site" description="axial binding residue" evidence="2">
    <location>
        <position position="52"/>
    </location>
    <ligand>
        <name>heme b</name>
        <dbReference type="ChEBI" id="CHEBI:60344"/>
        <label>1</label>
    </ligand>
    <ligandPart>
        <name>Fe</name>
        <dbReference type="ChEBI" id="CHEBI:18248"/>
    </ligandPart>
</feature>
<feature type="binding site" evidence="1">
    <location>
        <begin position="67"/>
        <end position="75"/>
    </location>
    <ligand>
        <name>L-ascorbate</name>
        <dbReference type="ChEBI" id="CHEBI:38290"/>
    </ligand>
</feature>
<feature type="binding site" description="axial binding residue" evidence="2">
    <location>
        <position position="86"/>
    </location>
    <ligand>
        <name>heme b</name>
        <dbReference type="ChEBI" id="CHEBI:60344"/>
        <label>2</label>
    </ligand>
    <ligandPart>
        <name>Fe</name>
        <dbReference type="ChEBI" id="CHEBI:18248"/>
    </ligandPart>
</feature>
<feature type="binding site" evidence="1">
    <location>
        <begin position="116"/>
        <end position="125"/>
    </location>
    <ligand>
        <name>monodehydro-L-ascorbate radical</name>
        <dbReference type="ChEBI" id="CHEBI:59513"/>
    </ligand>
</feature>
<feature type="binding site" description="axial binding residue" evidence="2">
    <location>
        <position position="120"/>
    </location>
    <ligand>
        <name>heme b</name>
        <dbReference type="ChEBI" id="CHEBI:60344"/>
        <label>1</label>
    </ligand>
    <ligandPart>
        <name>Fe</name>
        <dbReference type="ChEBI" id="CHEBI:18248"/>
    </ligandPart>
</feature>
<feature type="binding site" description="axial binding residue" evidence="2">
    <location>
        <position position="159"/>
    </location>
    <ligand>
        <name>heme b</name>
        <dbReference type="ChEBI" id="CHEBI:60344"/>
        <label>2</label>
    </ligand>
    <ligandPart>
        <name>Fe</name>
        <dbReference type="ChEBI" id="CHEBI:18248"/>
    </ligandPart>
</feature>
<feature type="mutagenesis site" description="Fast electron transfer at acidic pH." evidence="6">
    <original>R</original>
    <variation>A</variation>
    <location>
        <position position="72"/>
    </location>
</feature>
<feature type="mutagenesis site" description="Decreased redox potential of cytoplasmic heme." evidence="6">
    <original>K</original>
    <variation>A</variation>
    <variation>D</variation>
    <location>
        <position position="83"/>
    </location>
</feature>
<feature type="mutagenesis site" description="No effect." evidence="6">
    <original>K</original>
    <variation>E</variation>
    <location>
        <position position="83"/>
    </location>
</feature>
<feature type="mutagenesis site" description="No effect." evidence="6">
    <original>S</original>
    <variation>A</variation>
    <location>
        <position position="118"/>
    </location>
</feature>
<feature type="mutagenesis site" description="No effect." evidence="6">
    <original>W</original>
    <variation>A</variation>
    <location>
        <position position="122"/>
    </location>
</feature>
<name>ACET1_MAIZE</name>
<keyword id="KW-0903">Direct protein sequencing</keyword>
<keyword id="KW-0249">Electron transport</keyword>
<keyword id="KW-0349">Heme</keyword>
<keyword id="KW-0408">Iron</keyword>
<keyword id="KW-0472">Membrane</keyword>
<keyword id="KW-0479">Metal-binding</keyword>
<keyword id="KW-0560">Oxidoreductase</keyword>
<keyword id="KW-1185">Reference proteome</keyword>
<keyword id="KW-0812">Transmembrane</keyword>
<keyword id="KW-1133">Transmembrane helix</keyword>
<keyword id="KW-0813">Transport</keyword>